<comment type="subcellular location">
    <subcellularLocation>
        <location>Plastid</location>
        <location>Chloroplast</location>
    </subcellularLocation>
</comment>
<organism>
    <name type="scientific">Pyropia yezoensis</name>
    <name type="common">Susabi-nori</name>
    <name type="synonym">Porphyra yezoensis</name>
    <dbReference type="NCBI Taxonomy" id="2788"/>
    <lineage>
        <taxon>Eukaryota</taxon>
        <taxon>Rhodophyta</taxon>
        <taxon>Bangiophyceae</taxon>
        <taxon>Bangiales</taxon>
        <taxon>Bangiaceae</taxon>
        <taxon>Pyropia</taxon>
    </lineage>
</organism>
<keyword id="KW-0150">Chloroplast</keyword>
<keyword id="KW-0934">Plastid</keyword>
<geneLocation type="chloroplast"/>
<proteinExistence type="predicted"/>
<feature type="chain" id="PRO_0000277382" description="Uncharacterized protein ORF148">
    <location>
        <begin position="1"/>
        <end position="150"/>
    </location>
</feature>
<sequence length="150" mass="17839">MNNKSLIFLAIKSLDIQNQISLTSNIFNLSFDIQLNQIIIDSQIKSDKDLKSILLKVLNSIGNQSLDSNDLANNYKRRFRYYFSKMSFFRSLEKSIYENNILIDNLGITGLYLLYLIVEKEDVFKLWLYYKNYTFDQLIRLIETKNNFYN</sequence>
<name>YCXJ_PYRYE</name>
<accession>Q1XDD7</accession>
<dbReference type="EMBL" id="AP006715">
    <property type="protein sequence ID" value="BAE92474.1"/>
    <property type="molecule type" value="Genomic_DNA"/>
</dbReference>
<dbReference type="RefSeq" id="YP_537031.1">
    <property type="nucleotide sequence ID" value="NC_007932.1"/>
</dbReference>
<dbReference type="SMR" id="Q1XDD7"/>
<dbReference type="GeneID" id="3978802"/>
<dbReference type="GO" id="GO:0009507">
    <property type="term" value="C:chloroplast"/>
    <property type="evidence" value="ECO:0007669"/>
    <property type="project" value="UniProtKB-SubCell"/>
</dbReference>
<protein>
    <recommendedName>
        <fullName>Uncharacterized protein ORF148</fullName>
    </recommendedName>
</protein>
<reference key="1">
    <citation type="submission" date="2003-11" db="EMBL/GenBank/DDBJ databases">
        <title>Whole genome sequence of Porphyra yezoensis chloroplast.</title>
        <authorList>
            <person name="Kunimoto M."/>
            <person name="Morishima K."/>
            <person name="Yoshikawa M."/>
            <person name="Fukuda S."/>
            <person name="Kobayashi T."/>
            <person name="Kobayashi M."/>
            <person name="Okazaki T."/>
            <person name="Ohara I."/>
            <person name="Nakayama I."/>
        </authorList>
    </citation>
    <scope>NUCLEOTIDE SEQUENCE [LARGE SCALE GENOMIC DNA]</scope>
    <source>
        <strain>U-51</strain>
    </source>
</reference>